<proteinExistence type="inferred from homology"/>
<accession>C3P3K3</accession>
<reference key="1">
    <citation type="submission" date="2009-04" db="EMBL/GenBank/DDBJ databases">
        <title>Genome sequence of Bacillus anthracis A0248.</title>
        <authorList>
            <person name="Dodson R.J."/>
            <person name="Munk A.C."/>
            <person name="Bruce D."/>
            <person name="Detter C."/>
            <person name="Tapia R."/>
            <person name="Sutton G."/>
            <person name="Sims D."/>
            <person name="Brettin T."/>
        </authorList>
    </citation>
    <scope>NUCLEOTIDE SEQUENCE [LARGE SCALE GENOMIC DNA]</scope>
    <source>
        <strain>A0248</strain>
    </source>
</reference>
<keyword id="KW-0028">Amino-acid biosynthesis</keyword>
<keyword id="KW-0032">Aminotransferase</keyword>
<keyword id="KW-0963">Cytoplasm</keyword>
<keyword id="KW-0641">Proline biosynthesis</keyword>
<keyword id="KW-0663">Pyridoxal phosphate</keyword>
<keyword id="KW-0808">Transferase</keyword>
<feature type="chain" id="PRO_1000187435" description="Ornithine aminotransferase">
    <location>
        <begin position="1"/>
        <end position="396"/>
    </location>
</feature>
<feature type="modified residue" description="N6-(pyridoxal phosphate)lysine" evidence="1">
    <location>
        <position position="255"/>
    </location>
</feature>
<organism>
    <name type="scientific">Bacillus anthracis (strain A0248)</name>
    <dbReference type="NCBI Taxonomy" id="592021"/>
    <lineage>
        <taxon>Bacteria</taxon>
        <taxon>Bacillati</taxon>
        <taxon>Bacillota</taxon>
        <taxon>Bacilli</taxon>
        <taxon>Bacillales</taxon>
        <taxon>Bacillaceae</taxon>
        <taxon>Bacillus</taxon>
        <taxon>Bacillus cereus group</taxon>
    </lineage>
</organism>
<evidence type="ECO:0000255" key="1">
    <source>
        <dbReference type="HAMAP-Rule" id="MF_01689"/>
    </source>
</evidence>
<dbReference type="EC" id="2.6.1.13" evidence="1"/>
<dbReference type="EMBL" id="CP001598">
    <property type="protein sequence ID" value="ACQ49181.1"/>
    <property type="molecule type" value="Genomic_DNA"/>
</dbReference>
<dbReference type="RefSeq" id="WP_000616649.1">
    <property type="nucleotide sequence ID" value="NC_012659.1"/>
</dbReference>
<dbReference type="SMR" id="C3P3K3"/>
<dbReference type="GeneID" id="45021168"/>
<dbReference type="KEGG" id="bai:BAA_1236"/>
<dbReference type="HOGENOM" id="CLU_016922_10_3_9"/>
<dbReference type="UniPathway" id="UPA00098">
    <property type="reaction ID" value="UER00358"/>
</dbReference>
<dbReference type="GO" id="GO:0005737">
    <property type="term" value="C:cytoplasm"/>
    <property type="evidence" value="ECO:0007669"/>
    <property type="project" value="UniProtKB-SubCell"/>
</dbReference>
<dbReference type="GO" id="GO:0042802">
    <property type="term" value="F:identical protein binding"/>
    <property type="evidence" value="ECO:0007669"/>
    <property type="project" value="TreeGrafter"/>
</dbReference>
<dbReference type="GO" id="GO:0004587">
    <property type="term" value="F:ornithine aminotransferase activity"/>
    <property type="evidence" value="ECO:0007669"/>
    <property type="project" value="UniProtKB-UniRule"/>
</dbReference>
<dbReference type="GO" id="GO:0030170">
    <property type="term" value="F:pyridoxal phosphate binding"/>
    <property type="evidence" value="ECO:0007669"/>
    <property type="project" value="UniProtKB-UniRule"/>
</dbReference>
<dbReference type="GO" id="GO:0055129">
    <property type="term" value="P:L-proline biosynthetic process"/>
    <property type="evidence" value="ECO:0007669"/>
    <property type="project" value="UniProtKB-UniRule"/>
</dbReference>
<dbReference type="CDD" id="cd00610">
    <property type="entry name" value="OAT_like"/>
    <property type="match status" value="1"/>
</dbReference>
<dbReference type="FunFam" id="3.40.640.10:FF:000011">
    <property type="entry name" value="Ornithine aminotransferase"/>
    <property type="match status" value="1"/>
</dbReference>
<dbReference type="Gene3D" id="3.90.1150.10">
    <property type="entry name" value="Aspartate Aminotransferase, domain 1"/>
    <property type="match status" value="1"/>
</dbReference>
<dbReference type="Gene3D" id="3.40.640.10">
    <property type="entry name" value="Type I PLP-dependent aspartate aminotransferase-like (Major domain)"/>
    <property type="match status" value="1"/>
</dbReference>
<dbReference type="HAMAP" id="MF_01689">
    <property type="entry name" value="Ornith_aminotrans_3"/>
    <property type="match status" value="1"/>
</dbReference>
<dbReference type="InterPro" id="IPR005814">
    <property type="entry name" value="Aminotrans_3"/>
</dbReference>
<dbReference type="InterPro" id="IPR049704">
    <property type="entry name" value="Aminotrans_3_PPA_site"/>
</dbReference>
<dbReference type="InterPro" id="IPR050103">
    <property type="entry name" value="Class-III_PLP-dep_AT"/>
</dbReference>
<dbReference type="InterPro" id="IPR010164">
    <property type="entry name" value="Orn_aminotrans"/>
</dbReference>
<dbReference type="InterPro" id="IPR034757">
    <property type="entry name" value="Ornith_aminotrans_bact"/>
</dbReference>
<dbReference type="InterPro" id="IPR015424">
    <property type="entry name" value="PyrdxlP-dep_Trfase"/>
</dbReference>
<dbReference type="InterPro" id="IPR015421">
    <property type="entry name" value="PyrdxlP-dep_Trfase_major"/>
</dbReference>
<dbReference type="InterPro" id="IPR015422">
    <property type="entry name" value="PyrdxlP-dep_Trfase_small"/>
</dbReference>
<dbReference type="NCBIfam" id="TIGR01885">
    <property type="entry name" value="Orn_aminotrans"/>
    <property type="match status" value="1"/>
</dbReference>
<dbReference type="NCBIfam" id="NF003145">
    <property type="entry name" value="PRK04073.1"/>
    <property type="match status" value="1"/>
</dbReference>
<dbReference type="PANTHER" id="PTHR11986">
    <property type="entry name" value="AMINOTRANSFERASE CLASS III"/>
    <property type="match status" value="1"/>
</dbReference>
<dbReference type="PANTHER" id="PTHR11986:SF18">
    <property type="entry name" value="ORNITHINE AMINOTRANSFERASE, MITOCHONDRIAL"/>
    <property type="match status" value="1"/>
</dbReference>
<dbReference type="Pfam" id="PF00202">
    <property type="entry name" value="Aminotran_3"/>
    <property type="match status" value="1"/>
</dbReference>
<dbReference type="PIRSF" id="PIRSF000521">
    <property type="entry name" value="Transaminase_4ab_Lys_Orn"/>
    <property type="match status" value="1"/>
</dbReference>
<dbReference type="SUPFAM" id="SSF53383">
    <property type="entry name" value="PLP-dependent transferases"/>
    <property type="match status" value="1"/>
</dbReference>
<dbReference type="PROSITE" id="PS00600">
    <property type="entry name" value="AA_TRANSFER_CLASS_3"/>
    <property type="match status" value="1"/>
</dbReference>
<gene>
    <name evidence="1" type="primary">rocD</name>
    <name type="ordered locus">BAA_1236</name>
</gene>
<name>OAT_BACAA</name>
<comment type="function">
    <text evidence="1">Catalyzes the interconversion of ornithine to glutamate semialdehyde.</text>
</comment>
<comment type="catalytic activity">
    <reaction evidence="1">
        <text>a 2-oxocarboxylate + L-ornithine = L-glutamate 5-semialdehyde + an L-alpha-amino acid</text>
        <dbReference type="Rhea" id="RHEA:13877"/>
        <dbReference type="ChEBI" id="CHEBI:35179"/>
        <dbReference type="ChEBI" id="CHEBI:46911"/>
        <dbReference type="ChEBI" id="CHEBI:58066"/>
        <dbReference type="ChEBI" id="CHEBI:59869"/>
        <dbReference type="EC" id="2.6.1.13"/>
    </reaction>
</comment>
<comment type="cofactor">
    <cofactor evidence="1">
        <name>pyridoxal 5'-phosphate</name>
        <dbReference type="ChEBI" id="CHEBI:597326"/>
    </cofactor>
</comment>
<comment type="pathway">
    <text evidence="1">Amino-acid biosynthesis; L-proline biosynthesis; L-glutamate 5-semialdehyde from L-ornithine: step 1/1.</text>
</comment>
<comment type="subcellular location">
    <subcellularLocation>
        <location evidence="1">Cytoplasm</location>
    </subcellularLocation>
</comment>
<comment type="similarity">
    <text evidence="1">Belongs to the class-III pyridoxal-phosphate-dependent aminotransferase family. OAT subfamily.</text>
</comment>
<protein>
    <recommendedName>
        <fullName evidence="1">Ornithine aminotransferase</fullName>
        <shortName evidence="1">OAT</shortName>
        <ecNumber evidence="1">2.6.1.13</ecNumber>
    </recommendedName>
    <alternativeName>
        <fullName evidence="1">Ornithine--oxo-acid aminotransferase</fullName>
    </alternativeName>
</protein>
<sequence length="396" mass="43272">MIQTKDIIELTDTYGANNYHPLPIVISKAEGVWVEDPEGNRYMDLLSAYSAVNQGHRHPKIINALIDQANRVTLTSRAFHSDQLGPWYEKVAKLTNKEMVLPMNTGAEAVETAIKTARRWAYDVKKVEANRAEIIVCEDNFHGRTMGAVSMSSNEEYKRGFGPMLPGIIVIPYGDLEALKAAITPNTAAFILEPIQGEAGINIPPAGFLKEALEVCKKENVLFVADEIQTGLGRTGKVFACDWDNVTPDMYILGKALGGGVFPISCAAANRDILGVFEPGSHGSTFGGNPLACAVSIAALEVLEEEKLTERSLQLGEKLVGQLKEIDNPMITEVRGKGLFIGIELNEPARPYCEQLKAAGLLCKETHENVIRIAPPLVISEEDLEWAFQKIKAVLS</sequence>